<accession>P25480</accession>
<feature type="chain" id="PRO_0000165260" description="Probable portal protein">
    <location>
        <begin position="1"/>
        <end position="344"/>
    </location>
</feature>
<organismHost>
    <name type="scientific">Enterobacteriaceae</name>
    <dbReference type="NCBI Taxonomy" id="543"/>
</organismHost>
<proteinExistence type="evidence at protein level"/>
<gene>
    <name type="primary">Q</name>
</gene>
<reference key="1">
    <citation type="journal article" date="1991" name="Nucleic Acids Res.">
        <title>Nucleotide sequence of the DNA packaging and capsid synthesis genes of bacteriophage P2.</title>
        <authorList>
            <person name="Linderoth N.A."/>
            <person name="Ziermann R."/>
            <person name="Haggaard-Ljungquist E."/>
            <person name="Christie G.E."/>
            <person name="Calendar R."/>
        </authorList>
    </citation>
    <scope>NUCLEOTIDE SEQUENCE [GENOMIC DNA]</scope>
</reference>
<reference key="2">
    <citation type="journal article" date="1994" name="Virology">
        <title>Bacteriophage P2 and P4 morphogenesis: identification and characterization of the portal protein.</title>
        <authorList>
            <person name="Rishovd S."/>
            <person name="Marvik O.J."/>
            <person name="Jacobsen E."/>
            <person name="Lindqvist B.H."/>
        </authorList>
    </citation>
    <scope>FUNCTION</scope>
</reference>
<reference key="3">
    <citation type="journal article" date="2007" name="J. Struct. Biol.">
        <title>The gpQ portal protein of bacteriophage P2 forms dodecameric connectors in crystals.</title>
        <authorList>
            <person name="Doan D.N."/>
            <person name="Dokland T."/>
        </authorList>
    </citation>
    <scope>SUBUNIT</scope>
</reference>
<name>PORTL_BPP2</name>
<keyword id="KW-0167">Capsid protein</keyword>
<keyword id="KW-1185">Reference proteome</keyword>
<keyword id="KW-0118">Viral capsid assembly</keyword>
<keyword id="KW-1242">Viral contractile tail ejection system</keyword>
<keyword id="KW-1171">Viral genome ejection through host cell envelope</keyword>
<keyword id="KW-0231">Viral genome packaging</keyword>
<keyword id="KW-1162">Viral penetration into host cytoplasm</keyword>
<keyword id="KW-1188">Viral release from host cell</keyword>
<keyword id="KW-0946">Virion</keyword>
<keyword id="KW-1160">Virus entry into host cell</keyword>
<dbReference type="EMBL" id="AF063097">
    <property type="protein sequence ID" value="AAD03268.1"/>
    <property type="molecule type" value="Genomic_DNA"/>
</dbReference>
<dbReference type="PIR" id="S22796">
    <property type="entry name" value="S22796"/>
</dbReference>
<dbReference type="RefSeq" id="NP_046757.1">
    <property type="nucleotide sequence ID" value="NC_001895.1"/>
</dbReference>
<dbReference type="SMR" id="P25480"/>
<dbReference type="TCDB" id="1.W.3.1.1">
    <property type="family name" value="the phage portal protein 3 (ppp3) family"/>
</dbReference>
<dbReference type="GeneID" id="77440831"/>
<dbReference type="KEGG" id="vg:77440831"/>
<dbReference type="Proteomes" id="UP000009092">
    <property type="component" value="Genome"/>
</dbReference>
<dbReference type="GO" id="GO:0019028">
    <property type="term" value="C:viral capsid"/>
    <property type="evidence" value="ECO:0007669"/>
    <property type="project" value="UniProtKB-KW"/>
</dbReference>
<dbReference type="GO" id="GO:0099000">
    <property type="term" value="P:symbiont genome ejection through host cell envelope, contractile tail mechanism"/>
    <property type="evidence" value="ECO:0007669"/>
    <property type="project" value="UniProtKB-KW"/>
</dbReference>
<dbReference type="InterPro" id="IPR030935">
    <property type="entry name" value="PBSX_Proteobac"/>
</dbReference>
<dbReference type="InterPro" id="IPR006944">
    <property type="entry name" value="Phage/GTA_portal"/>
</dbReference>
<dbReference type="InterPro" id="IPR006430">
    <property type="entry name" value="Phage_portal_PBSX"/>
</dbReference>
<dbReference type="NCBIfam" id="TIGR01540">
    <property type="entry name" value="portal_PBSX"/>
    <property type="match status" value="1"/>
</dbReference>
<dbReference type="Pfam" id="PF04860">
    <property type="entry name" value="Phage_portal"/>
    <property type="match status" value="1"/>
</dbReference>
<dbReference type="PIRSF" id="PIRSF018494">
    <property type="entry name" value="PBSX_VPQ"/>
    <property type="match status" value="1"/>
</dbReference>
<organism>
    <name type="scientific">Escherichia phage P2</name>
    <name type="common">Bacteriophage P2</name>
    <dbReference type="NCBI Taxonomy" id="2905681"/>
    <lineage>
        <taxon>Viruses</taxon>
        <taxon>Duplodnaviria</taxon>
        <taxon>Heunggongvirae</taxon>
        <taxon>Uroviricota</taxon>
        <taxon>Caudoviricetes</taxon>
        <taxon>Peduoviridae</taxon>
        <taxon>Peduovirus</taxon>
        <taxon>Peduovirus P2</taxon>
    </lineage>
</organism>
<comment type="function">
    <text evidence="2 3">Forms the portal vertex of the capsid (PubMed:8178458). This portal plays critical roles in head assembly, genome packaging, neck/tail attachment, and genome ejection. The portal protein multimerizes as a single ring-shaped homododecamer arranged around a central channel. Binds to the terminase subunits to form the packaging machine.</text>
</comment>
<comment type="subunit">
    <text evidence="1">Homododecamer.</text>
</comment>
<comment type="subcellular location">
    <subcellularLocation>
        <location evidence="3">Virion</location>
    </subcellularLocation>
</comment>
<comment type="similarity">
    <text evidence="3">Belongs to the phage portal family. PBSX subfamily.</text>
</comment>
<sequence length="344" mass="39115">MSKKKGKTPQPAAKTMTASGPKMEAFTFGEPVPVLDRRDILDYVECISNGRWYEPPVSFTGLAKSLRAAVHHSSPIYVKRNILASTFIPHPWLSQQDFSRFVLDFLVFGNAFLEKRYSTTGKVIRLETSPAKYTRRGVEEDVYWWVPSFNEPTAFAPGSVFHLLEPDINQELYGLPEYLSALNSAWLNESATLFRRKYYENGAHAGYIMYVTDAVQDRNDIEMLRENMVKSKGRNNFKNLFLYAPQGKADGIKIIPLSEVATKDDFFNIKKASAADLLDAHRIPFQLMGGKPENVGSLGDIEKVAKVFVRNELIPLQDRIREINGWLGQEVIRFKNYSLDTDND</sequence>
<protein>
    <recommendedName>
        <fullName>Probable portal protein</fullName>
    </recommendedName>
    <alternativeName>
        <fullName>GpQ</fullName>
    </alternativeName>
</protein>
<evidence type="ECO:0000269" key="1">
    <source>
    </source>
</evidence>
<evidence type="ECO:0000269" key="2">
    <source>
    </source>
</evidence>
<evidence type="ECO:0000305" key="3"/>